<feature type="chain" id="PRO_1000195288" description="UPF0758 protein Cagg_0777">
    <location>
        <begin position="1"/>
        <end position="229"/>
    </location>
</feature>
<feature type="domain" description="MPN" evidence="1">
    <location>
        <begin position="105"/>
        <end position="227"/>
    </location>
</feature>
<feature type="short sequence motif" description="JAMM motif" evidence="1">
    <location>
        <begin position="176"/>
        <end position="189"/>
    </location>
</feature>
<feature type="binding site" evidence="1">
    <location>
        <position position="176"/>
    </location>
    <ligand>
        <name>Zn(2+)</name>
        <dbReference type="ChEBI" id="CHEBI:29105"/>
        <note>catalytic</note>
    </ligand>
</feature>
<feature type="binding site" evidence="1">
    <location>
        <position position="178"/>
    </location>
    <ligand>
        <name>Zn(2+)</name>
        <dbReference type="ChEBI" id="CHEBI:29105"/>
        <note>catalytic</note>
    </ligand>
</feature>
<feature type="binding site" evidence="1">
    <location>
        <position position="189"/>
    </location>
    <ligand>
        <name>Zn(2+)</name>
        <dbReference type="ChEBI" id="CHEBI:29105"/>
        <note>catalytic</note>
    </ligand>
</feature>
<keyword id="KW-0378">Hydrolase</keyword>
<keyword id="KW-0479">Metal-binding</keyword>
<keyword id="KW-0482">Metalloprotease</keyword>
<keyword id="KW-0645">Protease</keyword>
<keyword id="KW-0862">Zinc</keyword>
<organism>
    <name type="scientific">Chloroflexus aggregans (strain MD-66 / DSM 9485)</name>
    <dbReference type="NCBI Taxonomy" id="326427"/>
    <lineage>
        <taxon>Bacteria</taxon>
        <taxon>Bacillati</taxon>
        <taxon>Chloroflexota</taxon>
        <taxon>Chloroflexia</taxon>
        <taxon>Chloroflexales</taxon>
        <taxon>Chloroflexineae</taxon>
        <taxon>Chloroflexaceae</taxon>
        <taxon>Chloroflexus</taxon>
    </lineage>
</organism>
<evidence type="ECO:0000255" key="1">
    <source>
        <dbReference type="PROSITE-ProRule" id="PRU01182"/>
    </source>
</evidence>
<evidence type="ECO:0000305" key="2"/>
<sequence length="229" mass="25105">MVSLRMHELPVNDQPRERLARLGAGALSDAELLAILLRVGISGTNVLQLAQQLLGEYGGWIGLQVADYNDLCRRTGIGASKAATIKAALEIGRRLARSSVEERYPIRSPGDVAALLMVEMSHLDQEHLRTVLLDTKHRVQQINTVYIGSLNSATIRIGEVFKEAVRRNSAAIIVVHNHPSGEATPSPEDIQVTRQLVAAGRLLDIEVLDHLIIGRGQYVSLRERGIGFE</sequence>
<proteinExistence type="inferred from homology"/>
<gene>
    <name type="ordered locus">Cagg_0777</name>
</gene>
<dbReference type="EMBL" id="CP001337">
    <property type="protein sequence ID" value="ACL23701.1"/>
    <property type="molecule type" value="Genomic_DNA"/>
</dbReference>
<dbReference type="RefSeq" id="WP_012616067.1">
    <property type="nucleotide sequence ID" value="NC_011831.1"/>
</dbReference>
<dbReference type="SMR" id="B8G568"/>
<dbReference type="STRING" id="326427.Cagg_0777"/>
<dbReference type="KEGG" id="cag:Cagg_0777"/>
<dbReference type="eggNOG" id="COG2003">
    <property type="taxonomic scope" value="Bacteria"/>
</dbReference>
<dbReference type="HOGENOM" id="CLU_073529_0_2_0"/>
<dbReference type="OrthoDB" id="9804482at2"/>
<dbReference type="Proteomes" id="UP000002508">
    <property type="component" value="Chromosome"/>
</dbReference>
<dbReference type="GO" id="GO:0046872">
    <property type="term" value="F:metal ion binding"/>
    <property type="evidence" value="ECO:0007669"/>
    <property type="project" value="UniProtKB-KW"/>
</dbReference>
<dbReference type="GO" id="GO:0008237">
    <property type="term" value="F:metallopeptidase activity"/>
    <property type="evidence" value="ECO:0007669"/>
    <property type="project" value="UniProtKB-KW"/>
</dbReference>
<dbReference type="GO" id="GO:0006508">
    <property type="term" value="P:proteolysis"/>
    <property type="evidence" value="ECO:0007669"/>
    <property type="project" value="UniProtKB-KW"/>
</dbReference>
<dbReference type="CDD" id="cd08071">
    <property type="entry name" value="MPN_DUF2466"/>
    <property type="match status" value="1"/>
</dbReference>
<dbReference type="Gene3D" id="3.40.140.10">
    <property type="entry name" value="Cytidine Deaminase, domain 2"/>
    <property type="match status" value="1"/>
</dbReference>
<dbReference type="InterPro" id="IPR037518">
    <property type="entry name" value="MPN"/>
</dbReference>
<dbReference type="InterPro" id="IPR025657">
    <property type="entry name" value="RadC_JAB"/>
</dbReference>
<dbReference type="InterPro" id="IPR010994">
    <property type="entry name" value="RuvA_2-like"/>
</dbReference>
<dbReference type="InterPro" id="IPR001405">
    <property type="entry name" value="UPF0758"/>
</dbReference>
<dbReference type="InterPro" id="IPR020891">
    <property type="entry name" value="UPF0758_CS"/>
</dbReference>
<dbReference type="InterPro" id="IPR046778">
    <property type="entry name" value="UPF0758_N"/>
</dbReference>
<dbReference type="NCBIfam" id="NF000642">
    <property type="entry name" value="PRK00024.1"/>
    <property type="match status" value="1"/>
</dbReference>
<dbReference type="NCBIfam" id="TIGR00608">
    <property type="entry name" value="radc"/>
    <property type="match status" value="1"/>
</dbReference>
<dbReference type="PANTHER" id="PTHR30471">
    <property type="entry name" value="DNA REPAIR PROTEIN RADC"/>
    <property type="match status" value="1"/>
</dbReference>
<dbReference type="PANTHER" id="PTHR30471:SF3">
    <property type="entry name" value="UPF0758 PROTEIN YEES-RELATED"/>
    <property type="match status" value="1"/>
</dbReference>
<dbReference type="Pfam" id="PF04002">
    <property type="entry name" value="RadC"/>
    <property type="match status" value="1"/>
</dbReference>
<dbReference type="Pfam" id="PF20582">
    <property type="entry name" value="UPF0758_N"/>
    <property type="match status" value="1"/>
</dbReference>
<dbReference type="SUPFAM" id="SSF102712">
    <property type="entry name" value="JAB1/MPN domain"/>
    <property type="match status" value="1"/>
</dbReference>
<dbReference type="SUPFAM" id="SSF47781">
    <property type="entry name" value="RuvA domain 2-like"/>
    <property type="match status" value="1"/>
</dbReference>
<dbReference type="PROSITE" id="PS50249">
    <property type="entry name" value="MPN"/>
    <property type="match status" value="1"/>
</dbReference>
<dbReference type="PROSITE" id="PS01302">
    <property type="entry name" value="UPF0758"/>
    <property type="match status" value="1"/>
</dbReference>
<accession>B8G568</accession>
<comment type="similarity">
    <text evidence="2">Belongs to the UPF0758 family.</text>
</comment>
<name>Y777_CHLAD</name>
<protein>
    <recommendedName>
        <fullName>UPF0758 protein Cagg_0777</fullName>
    </recommendedName>
</protein>
<reference key="1">
    <citation type="submission" date="2008-12" db="EMBL/GenBank/DDBJ databases">
        <title>Complete sequence of Chloroflexus aggregans DSM 9485.</title>
        <authorList>
            <consortium name="US DOE Joint Genome Institute"/>
            <person name="Lucas S."/>
            <person name="Copeland A."/>
            <person name="Lapidus A."/>
            <person name="Glavina del Rio T."/>
            <person name="Dalin E."/>
            <person name="Tice H."/>
            <person name="Pitluck S."/>
            <person name="Foster B."/>
            <person name="Larimer F."/>
            <person name="Land M."/>
            <person name="Hauser L."/>
            <person name="Kyrpides N."/>
            <person name="Mikhailova N."/>
            <person name="Bryant D.A."/>
            <person name="Richardson P."/>
        </authorList>
    </citation>
    <scope>NUCLEOTIDE SEQUENCE [LARGE SCALE GENOMIC DNA]</scope>
    <source>
        <strain>MD-66 / DSM 9485</strain>
    </source>
</reference>